<comment type="function">
    <text evidence="1">Catalyzes the NADP(+)-dependent oxidation of succinate semialdehyde to succinate. It is believed to be the main source of succinate semialdehyde dehydrogenase activity in Mycobacterium (By similarity).</text>
</comment>
<comment type="catalytic activity">
    <reaction>
        <text>succinate semialdehyde + NADP(+) + H2O = succinate + NADPH + 2 H(+)</text>
        <dbReference type="Rhea" id="RHEA:13213"/>
        <dbReference type="ChEBI" id="CHEBI:15377"/>
        <dbReference type="ChEBI" id="CHEBI:15378"/>
        <dbReference type="ChEBI" id="CHEBI:30031"/>
        <dbReference type="ChEBI" id="CHEBI:57706"/>
        <dbReference type="ChEBI" id="CHEBI:57783"/>
        <dbReference type="ChEBI" id="CHEBI:58349"/>
        <dbReference type="EC" id="1.2.1.79"/>
    </reaction>
</comment>
<comment type="similarity">
    <text evidence="3">Belongs to the aldehyde dehydrogenase family.</text>
</comment>
<proteinExistence type="inferred from homology"/>
<gene>
    <name type="primary">gabD1</name>
    <name type="ordered locus">MAV_4936</name>
</gene>
<protein>
    <recommendedName>
        <fullName>Succinate-semialdehyde dehydrogenase [NADP(+)]</fullName>
        <shortName>SSADH</shortName>
        <shortName>SSDH</shortName>
        <ecNumber>1.2.1.79</ecNumber>
    </recommendedName>
</protein>
<accession>A0QMB9</accession>
<reference key="1">
    <citation type="submission" date="2006-10" db="EMBL/GenBank/DDBJ databases">
        <authorList>
            <person name="Fleischmann R.D."/>
            <person name="Dodson R.J."/>
            <person name="Haft D.H."/>
            <person name="Merkel J.S."/>
            <person name="Nelson W.C."/>
            <person name="Fraser C.M."/>
        </authorList>
    </citation>
    <scope>NUCLEOTIDE SEQUENCE [LARGE SCALE GENOMIC DNA]</scope>
    <source>
        <strain>104</strain>
    </source>
</reference>
<evidence type="ECO:0000250" key="1"/>
<evidence type="ECO:0000255" key="2">
    <source>
        <dbReference type="PROSITE-ProRule" id="PRU10008"/>
    </source>
</evidence>
<evidence type="ECO:0000305" key="3"/>
<name>GABD1_MYCA1</name>
<dbReference type="EC" id="1.2.1.79"/>
<dbReference type="EMBL" id="CP000479">
    <property type="protein sequence ID" value="ABK64449.1"/>
    <property type="molecule type" value="Genomic_DNA"/>
</dbReference>
<dbReference type="RefSeq" id="WP_009979644.1">
    <property type="nucleotide sequence ID" value="NC_008595.1"/>
</dbReference>
<dbReference type="SMR" id="A0QMB9"/>
<dbReference type="KEGG" id="mav:MAV_4936"/>
<dbReference type="HOGENOM" id="CLU_005391_5_1_11"/>
<dbReference type="Proteomes" id="UP000001574">
    <property type="component" value="Chromosome"/>
</dbReference>
<dbReference type="GO" id="GO:0004030">
    <property type="term" value="F:aldehyde dehydrogenase [NAD(P)+] activity"/>
    <property type="evidence" value="ECO:0007669"/>
    <property type="project" value="InterPro"/>
</dbReference>
<dbReference type="GO" id="GO:0004777">
    <property type="term" value="F:succinate-semialdehyde dehydrogenase (NAD+) activity"/>
    <property type="evidence" value="ECO:0007669"/>
    <property type="project" value="TreeGrafter"/>
</dbReference>
<dbReference type="GO" id="GO:0036243">
    <property type="term" value="F:succinate-semialdehyde dehydrogenase (NADP+) activity"/>
    <property type="evidence" value="ECO:0007669"/>
    <property type="project" value="UniProtKB-EC"/>
</dbReference>
<dbReference type="GO" id="GO:0006099">
    <property type="term" value="P:tricarboxylic acid cycle"/>
    <property type="evidence" value="ECO:0007669"/>
    <property type="project" value="UniProtKB-KW"/>
</dbReference>
<dbReference type="CDD" id="cd07100">
    <property type="entry name" value="ALDH_SSADH1_GabD1"/>
    <property type="match status" value="1"/>
</dbReference>
<dbReference type="FunFam" id="3.40.309.10:FF:000010">
    <property type="entry name" value="Gamma-aminobutyraldehyde dehydrogenase"/>
    <property type="match status" value="1"/>
</dbReference>
<dbReference type="FunFam" id="3.40.605.10:FF:000012">
    <property type="entry name" value="NAD-dependent succinate-semialdehyde dehydrogenase"/>
    <property type="match status" value="1"/>
</dbReference>
<dbReference type="Gene3D" id="3.40.605.10">
    <property type="entry name" value="Aldehyde Dehydrogenase, Chain A, domain 1"/>
    <property type="match status" value="1"/>
</dbReference>
<dbReference type="Gene3D" id="3.40.309.10">
    <property type="entry name" value="Aldehyde Dehydrogenase, Chain A, domain 2"/>
    <property type="match status" value="1"/>
</dbReference>
<dbReference type="InterPro" id="IPR016161">
    <property type="entry name" value="Ald_DH/histidinol_DH"/>
</dbReference>
<dbReference type="InterPro" id="IPR016163">
    <property type="entry name" value="Ald_DH_C"/>
</dbReference>
<dbReference type="InterPro" id="IPR016160">
    <property type="entry name" value="Ald_DH_CS_CYS"/>
</dbReference>
<dbReference type="InterPro" id="IPR016162">
    <property type="entry name" value="Ald_DH_N"/>
</dbReference>
<dbReference type="InterPro" id="IPR015590">
    <property type="entry name" value="Aldehyde_DH_dom"/>
</dbReference>
<dbReference type="InterPro" id="IPR044148">
    <property type="entry name" value="ALDH_GabD1-like"/>
</dbReference>
<dbReference type="InterPro" id="IPR047110">
    <property type="entry name" value="GABD/Sad-like"/>
</dbReference>
<dbReference type="NCBIfam" id="NF006915">
    <property type="entry name" value="PRK09406.1"/>
    <property type="match status" value="1"/>
</dbReference>
<dbReference type="PANTHER" id="PTHR43217">
    <property type="entry name" value="SUCCINATE SEMIALDEHYDE DEHYDROGENASE [NAD(P)+] SAD"/>
    <property type="match status" value="1"/>
</dbReference>
<dbReference type="PANTHER" id="PTHR43217:SF1">
    <property type="entry name" value="SUCCINATE SEMIALDEHYDE DEHYDROGENASE [NAD(P)+] SAD"/>
    <property type="match status" value="1"/>
</dbReference>
<dbReference type="Pfam" id="PF00171">
    <property type="entry name" value="Aldedh"/>
    <property type="match status" value="1"/>
</dbReference>
<dbReference type="SUPFAM" id="SSF53720">
    <property type="entry name" value="ALDH-like"/>
    <property type="match status" value="1"/>
</dbReference>
<dbReference type="PROSITE" id="PS00070">
    <property type="entry name" value="ALDEHYDE_DEHYDR_CYS"/>
    <property type="match status" value="1"/>
</dbReference>
<sequence>MPIATINPATGETVKTFTPASDAEVDAAIARAYERFLDYRHSTTFAQRAQWANATADLLEAEADEVAAMMTLEMGKTLKSAKAEALKCAKGFRYYAQNAEQLLADEPADAGKVGAARAYIRYQPLGVVLAVMPWNFPLWQAVRFAAPALMAGNVGILKHASNVPQSALYLADVITRGGFPEGCFQTLLVPSSAVERILRDPRVAAATLTGSEPAGQSVAAIAGDEIKPTVLELGGSDPFIVMPSADLDEAVKTAVTARVQNNGQSCIAAKRFIVHTDIYDTFVDKFVEQMKALKVGDPTDPATDVGPLATESGRDEIAKQVDDAVAAGATLRCGGKPLDGPGWFYPPTVVTDITKDMALYTEEVFGPVASMYRAADIDEAIEIANATTFGLGSNAWTNDAAEQQRFIDDIEAGQVFINGMTVSYPELGFGGVKRSGYGRELAGLGIRAFCNAKTVWIGSSKSGDAGGGSKVE</sequence>
<organism>
    <name type="scientific">Mycobacterium avium (strain 104)</name>
    <dbReference type="NCBI Taxonomy" id="243243"/>
    <lineage>
        <taxon>Bacteria</taxon>
        <taxon>Bacillati</taxon>
        <taxon>Actinomycetota</taxon>
        <taxon>Actinomycetes</taxon>
        <taxon>Mycobacteriales</taxon>
        <taxon>Mycobacteriaceae</taxon>
        <taxon>Mycobacterium</taxon>
        <taxon>Mycobacterium avium complex (MAC)</taxon>
    </lineage>
</organism>
<feature type="chain" id="PRO_0000310700" description="Succinate-semialdehyde dehydrogenase [NADP(+)]">
    <location>
        <begin position="1"/>
        <end position="472"/>
    </location>
</feature>
<feature type="active site" description="Proton acceptor" evidence="2">
    <location>
        <position position="232"/>
    </location>
</feature>
<feature type="active site" description="Nucleophile" evidence="2">
    <location>
        <position position="266"/>
    </location>
</feature>
<feature type="binding site" evidence="1">
    <location>
        <begin position="134"/>
        <end position="135"/>
    </location>
    <ligand>
        <name>NADP(+)</name>
        <dbReference type="ChEBI" id="CHEBI:58349"/>
    </ligand>
</feature>
<feature type="binding site" evidence="1">
    <location>
        <begin position="158"/>
        <end position="161"/>
    </location>
    <ligand>
        <name>NADP(+)</name>
        <dbReference type="ChEBI" id="CHEBI:58349"/>
    </ligand>
</feature>
<feature type="binding site" evidence="1">
    <location>
        <begin position="210"/>
        <end position="211"/>
    </location>
    <ligand>
        <name>NADP(+)</name>
        <dbReference type="ChEBI" id="CHEBI:58349"/>
    </ligand>
</feature>
<feature type="binding site" evidence="1">
    <location>
        <position position="233"/>
    </location>
    <ligand>
        <name>NADP(+)</name>
        <dbReference type="ChEBI" id="CHEBI:58349"/>
    </ligand>
</feature>
<feature type="binding site" evidence="1">
    <location>
        <position position="363"/>
    </location>
    <ligand>
        <name>NADP(+)</name>
        <dbReference type="ChEBI" id="CHEBI:58349"/>
    </ligand>
</feature>
<keyword id="KW-0521">NADP</keyword>
<keyword id="KW-0560">Oxidoreductase</keyword>
<keyword id="KW-0816">Tricarboxylic acid cycle</keyword>